<evidence type="ECO:0000255" key="1">
    <source>
        <dbReference type="HAMAP-Rule" id="MF_00171"/>
    </source>
</evidence>
<keyword id="KW-0413">Isomerase</keyword>
<keyword id="KW-1185">Reference proteome</keyword>
<keyword id="KW-0819">tRNA processing</keyword>
<name>TRUA_HELHP</name>
<comment type="function">
    <text evidence="1">Formation of pseudouridine at positions 38, 39 and 40 in the anticodon stem and loop of transfer RNAs.</text>
</comment>
<comment type="catalytic activity">
    <reaction evidence="1">
        <text>uridine(38/39/40) in tRNA = pseudouridine(38/39/40) in tRNA</text>
        <dbReference type="Rhea" id="RHEA:22376"/>
        <dbReference type="Rhea" id="RHEA-COMP:10085"/>
        <dbReference type="Rhea" id="RHEA-COMP:10087"/>
        <dbReference type="ChEBI" id="CHEBI:65314"/>
        <dbReference type="ChEBI" id="CHEBI:65315"/>
        <dbReference type="EC" id="5.4.99.12"/>
    </reaction>
</comment>
<comment type="subunit">
    <text evidence="1">Homodimer.</text>
</comment>
<comment type="similarity">
    <text evidence="1">Belongs to the tRNA pseudouridine synthase TruA family.</text>
</comment>
<proteinExistence type="inferred from homology"/>
<accession>Q7U328</accession>
<gene>
    <name evidence="1" type="primary">truA</name>
    <name type="ordered locus">HH_0601</name>
</gene>
<dbReference type="EC" id="5.4.99.12" evidence="1"/>
<dbReference type="EMBL" id="AE017125">
    <property type="protein sequence ID" value="AAP77198.1"/>
    <property type="molecule type" value="Genomic_DNA"/>
</dbReference>
<dbReference type="RefSeq" id="WP_011115443.1">
    <property type="nucleotide sequence ID" value="NC_004917.1"/>
</dbReference>
<dbReference type="SMR" id="Q7U328"/>
<dbReference type="STRING" id="235279.HH_0601"/>
<dbReference type="KEGG" id="hhe:HH_0601"/>
<dbReference type="eggNOG" id="COG0101">
    <property type="taxonomic scope" value="Bacteria"/>
</dbReference>
<dbReference type="HOGENOM" id="CLU_014673_0_1_7"/>
<dbReference type="OrthoDB" id="9811823at2"/>
<dbReference type="Proteomes" id="UP000002495">
    <property type="component" value="Chromosome"/>
</dbReference>
<dbReference type="GO" id="GO:0003723">
    <property type="term" value="F:RNA binding"/>
    <property type="evidence" value="ECO:0007669"/>
    <property type="project" value="InterPro"/>
</dbReference>
<dbReference type="GO" id="GO:0160147">
    <property type="term" value="F:tRNA pseudouridine(38-40) synthase activity"/>
    <property type="evidence" value="ECO:0007669"/>
    <property type="project" value="UniProtKB-EC"/>
</dbReference>
<dbReference type="GO" id="GO:0031119">
    <property type="term" value="P:tRNA pseudouridine synthesis"/>
    <property type="evidence" value="ECO:0007669"/>
    <property type="project" value="UniProtKB-UniRule"/>
</dbReference>
<dbReference type="CDD" id="cd02570">
    <property type="entry name" value="PseudoU_synth_EcTruA"/>
    <property type="match status" value="1"/>
</dbReference>
<dbReference type="Gene3D" id="3.30.70.660">
    <property type="entry name" value="Pseudouridine synthase I, catalytic domain, C-terminal subdomain"/>
    <property type="match status" value="1"/>
</dbReference>
<dbReference type="Gene3D" id="3.30.70.580">
    <property type="entry name" value="Pseudouridine synthase I, catalytic domain, N-terminal subdomain"/>
    <property type="match status" value="1"/>
</dbReference>
<dbReference type="HAMAP" id="MF_00171">
    <property type="entry name" value="TruA"/>
    <property type="match status" value="1"/>
</dbReference>
<dbReference type="InterPro" id="IPR020103">
    <property type="entry name" value="PsdUridine_synth_cat_dom_sf"/>
</dbReference>
<dbReference type="InterPro" id="IPR001406">
    <property type="entry name" value="PsdUridine_synth_TruA"/>
</dbReference>
<dbReference type="InterPro" id="IPR020097">
    <property type="entry name" value="PsdUridine_synth_TruA_a/b_dom"/>
</dbReference>
<dbReference type="InterPro" id="IPR020095">
    <property type="entry name" value="PsdUridine_synth_TruA_C"/>
</dbReference>
<dbReference type="InterPro" id="IPR020094">
    <property type="entry name" value="TruA/RsuA/RluB/E/F_N"/>
</dbReference>
<dbReference type="NCBIfam" id="TIGR00071">
    <property type="entry name" value="hisT_truA"/>
    <property type="match status" value="1"/>
</dbReference>
<dbReference type="PANTHER" id="PTHR11142">
    <property type="entry name" value="PSEUDOURIDYLATE SYNTHASE"/>
    <property type="match status" value="1"/>
</dbReference>
<dbReference type="PANTHER" id="PTHR11142:SF0">
    <property type="entry name" value="TRNA PSEUDOURIDINE SYNTHASE-LIKE 1"/>
    <property type="match status" value="1"/>
</dbReference>
<dbReference type="Pfam" id="PF01416">
    <property type="entry name" value="PseudoU_synth_1"/>
    <property type="match status" value="2"/>
</dbReference>
<dbReference type="PIRSF" id="PIRSF001430">
    <property type="entry name" value="tRNA_psdUrid_synth"/>
    <property type="match status" value="1"/>
</dbReference>
<dbReference type="SUPFAM" id="SSF55120">
    <property type="entry name" value="Pseudouridine synthase"/>
    <property type="match status" value="1"/>
</dbReference>
<reference key="1">
    <citation type="journal article" date="2003" name="Proc. Natl. Acad. Sci. U.S.A.">
        <title>The complete genome sequence of the carcinogenic bacterium Helicobacter hepaticus.</title>
        <authorList>
            <person name="Suerbaum S."/>
            <person name="Josenhans C."/>
            <person name="Sterzenbach T."/>
            <person name="Drescher B."/>
            <person name="Brandt P."/>
            <person name="Bell M."/>
            <person name="Droege M."/>
            <person name="Fartmann B."/>
            <person name="Fischer H.-P."/>
            <person name="Ge Z."/>
            <person name="Hoerster A."/>
            <person name="Holland R."/>
            <person name="Klein K."/>
            <person name="Koenig J."/>
            <person name="Macko L."/>
            <person name="Mendz G.L."/>
            <person name="Nyakatura G."/>
            <person name="Schauer D.B."/>
            <person name="Shen Z."/>
            <person name="Weber J."/>
            <person name="Frosch M."/>
            <person name="Fox J.G."/>
        </authorList>
    </citation>
    <scope>NUCLEOTIDE SEQUENCE [LARGE SCALE GENOMIC DNA]</scope>
    <source>
        <strain>ATCC 51449 / 3B1</strain>
    </source>
</reference>
<sequence>MPTYKAVIAYDGSVFSGFALQKDKRLKSVLGTLKEGFARVGIKSDIIGAGRTDKGVHATGQVICFQSAHFLDSQVQAIESLRFLLNAKLYPHIMVRSLHIVDDTFHPRFDALWRSYRFLLSPTQPSPFAAPYVSYEKIGDETLFKNALQAFQGQHNFVFFKKNGSYTKNCIRTIFAIKHYTYKGLDIVYVRGNGFLRAQVRLMVGAALAYSRAELSFHSLQEQINGQKQHYTYPISPNGLYLCEVGYR</sequence>
<feature type="chain" id="PRO_0000057389" description="tRNA pseudouridine synthase A">
    <location>
        <begin position="1"/>
        <end position="248"/>
    </location>
</feature>
<feature type="active site" description="Nucleophile" evidence="1">
    <location>
        <position position="53"/>
    </location>
</feature>
<feature type="binding site" evidence="1">
    <location>
        <position position="116"/>
    </location>
    <ligand>
        <name>substrate</name>
    </ligand>
</feature>
<organism>
    <name type="scientific">Helicobacter hepaticus (strain ATCC 51449 / 3B1)</name>
    <dbReference type="NCBI Taxonomy" id="235279"/>
    <lineage>
        <taxon>Bacteria</taxon>
        <taxon>Pseudomonadati</taxon>
        <taxon>Campylobacterota</taxon>
        <taxon>Epsilonproteobacteria</taxon>
        <taxon>Campylobacterales</taxon>
        <taxon>Helicobacteraceae</taxon>
        <taxon>Helicobacter</taxon>
    </lineage>
</organism>
<protein>
    <recommendedName>
        <fullName evidence="1">tRNA pseudouridine synthase A</fullName>
        <ecNumber evidence="1">5.4.99.12</ecNumber>
    </recommendedName>
    <alternativeName>
        <fullName evidence="1">tRNA pseudouridine(38-40) synthase</fullName>
    </alternativeName>
    <alternativeName>
        <fullName evidence="1">tRNA pseudouridylate synthase I</fullName>
    </alternativeName>
    <alternativeName>
        <fullName evidence="1">tRNA-uridine isomerase I</fullName>
    </alternativeName>
</protein>